<proteinExistence type="evidence at transcript level"/>
<protein>
    <recommendedName>
        <fullName evidence="3">Conotoxin LeDr243</fullName>
    </recommendedName>
</protein>
<name>CT243_CONLT</name>
<keyword id="KW-0027">Amidation</keyword>
<keyword id="KW-0165">Cleavage on pair of basic residues</keyword>
<keyword id="KW-1015">Disulfide bond</keyword>
<keyword id="KW-0964">Secreted</keyword>
<keyword id="KW-0732">Signal</keyword>
<keyword id="KW-0800">Toxin</keyword>
<evidence type="ECO:0000250" key="1"/>
<evidence type="ECO:0000255" key="2"/>
<evidence type="ECO:0000303" key="3">
    <source>
    </source>
</evidence>
<evidence type="ECO:0000305" key="4"/>
<comment type="subcellular location">
    <subcellularLocation>
        <location evidence="1">Secreted</location>
    </subcellularLocation>
</comment>
<comment type="tissue specificity">
    <text>Expressed by the venom duct.</text>
</comment>
<comment type="domain">
    <text>The cysteine framework is V (CC-CC).</text>
</comment>
<comment type="PTM">
    <text evidence="4">Contains 2 disulfide bonds that can be either 'C1-C3, C2-C4' or 'C1-C4, C2-C3', since these disulfide connectivities have been observed for conotoxins with cysteine framework V (for examples, see AC P0DQQ7 and AC P81755).</text>
</comment>
<comment type="similarity">
    <text evidence="4">Belongs to the conotoxin T superfamily.</text>
</comment>
<feature type="signal peptide" evidence="2">
    <location>
        <begin position="1"/>
        <end position="22"/>
    </location>
</feature>
<feature type="propeptide" id="PRO_0000274068" evidence="1">
    <location>
        <begin position="23"/>
        <end position="47"/>
    </location>
</feature>
<feature type="peptide" id="PRO_0000274069" description="Conotoxin LeDr243">
    <location>
        <begin position="50"/>
        <end position="60"/>
    </location>
</feature>
<feature type="propeptide" id="PRO_0000274070" evidence="4">
    <location>
        <begin position="62"/>
        <end position="63"/>
    </location>
</feature>
<feature type="modified residue" description="Cysteine amide" evidence="1">
    <location>
        <position position="60"/>
    </location>
</feature>
<accession>Q3YEH0</accession>
<reference key="1">
    <citation type="journal article" date="2006" name="Chem. Biol. Drug Des.">
        <title>Identification and molecular diversity of T-superfamily conotoxins from Conus lividus and Conus litteratus.</title>
        <authorList>
            <person name="Luo S."/>
            <person name="Zhangsun D."/>
            <person name="Wu Y."/>
            <person name="Zhu X."/>
            <person name="Xie L."/>
            <person name="Hu Y."/>
            <person name="Zhang J."/>
            <person name="Zhao X."/>
        </authorList>
    </citation>
    <scope>NUCLEOTIDE SEQUENCE [MRNA]</scope>
    <source>
        <tissue>Venom duct</tissue>
    </source>
</reference>
<organism>
    <name type="scientific">Conus litteratus</name>
    <name type="common">Lettered cone</name>
    <dbReference type="NCBI Taxonomy" id="89445"/>
    <lineage>
        <taxon>Eukaryota</taxon>
        <taxon>Metazoa</taxon>
        <taxon>Spiralia</taxon>
        <taxon>Lophotrochozoa</taxon>
        <taxon>Mollusca</taxon>
        <taxon>Gastropoda</taxon>
        <taxon>Caenogastropoda</taxon>
        <taxon>Neogastropoda</taxon>
        <taxon>Conoidea</taxon>
        <taxon>Conidae</taxon>
        <taxon>Conus</taxon>
        <taxon>Elisaconus</taxon>
    </lineage>
</organism>
<sequence length="63" mass="6915">MRCLPVFVILLLLIASTPSIDARPKTKDDMPLASFNDNAKRILQILSRKPCCSIHDNSCCGLG</sequence>
<dbReference type="EMBL" id="DQ141143">
    <property type="protein sequence ID" value="AAZ85408.1"/>
    <property type="molecule type" value="mRNA"/>
</dbReference>
<dbReference type="ConoServer" id="1680">
    <property type="toxin name" value="Lt5.2 precursor"/>
</dbReference>
<dbReference type="GO" id="GO:0005576">
    <property type="term" value="C:extracellular region"/>
    <property type="evidence" value="ECO:0007669"/>
    <property type="project" value="UniProtKB-SubCell"/>
</dbReference>
<dbReference type="GO" id="GO:0090729">
    <property type="term" value="F:toxin activity"/>
    <property type="evidence" value="ECO:0007669"/>
    <property type="project" value="UniProtKB-KW"/>
</dbReference>
<dbReference type="InterPro" id="IPR031565">
    <property type="entry name" value="T-conotoxin"/>
</dbReference>
<dbReference type="Pfam" id="PF16981">
    <property type="entry name" value="Chi-conotoxin"/>
    <property type="match status" value="1"/>
</dbReference>